<comment type="similarity">
    <text evidence="1">Belongs to the UPF0502 family.</text>
</comment>
<proteinExistence type="inferred from homology"/>
<dbReference type="EMBL" id="CP000444">
    <property type="protein sequence ID" value="ABI42624.1"/>
    <property type="molecule type" value="Genomic_DNA"/>
</dbReference>
<dbReference type="SMR" id="Q0HW81"/>
<dbReference type="KEGG" id="shm:Shewmr7_1629"/>
<dbReference type="HOGENOM" id="CLU_057831_2_0_6"/>
<dbReference type="Gene3D" id="1.10.10.10">
    <property type="entry name" value="Winged helix-like DNA-binding domain superfamily/Winged helix DNA-binding domain"/>
    <property type="match status" value="2"/>
</dbReference>
<dbReference type="HAMAP" id="MF_01584">
    <property type="entry name" value="UPF0502"/>
    <property type="match status" value="1"/>
</dbReference>
<dbReference type="InterPro" id="IPR007432">
    <property type="entry name" value="DUF480"/>
</dbReference>
<dbReference type="InterPro" id="IPR036388">
    <property type="entry name" value="WH-like_DNA-bd_sf"/>
</dbReference>
<dbReference type="InterPro" id="IPR036390">
    <property type="entry name" value="WH_DNA-bd_sf"/>
</dbReference>
<dbReference type="PANTHER" id="PTHR38768">
    <property type="entry name" value="UPF0502 PROTEIN YCEH"/>
    <property type="match status" value="1"/>
</dbReference>
<dbReference type="PANTHER" id="PTHR38768:SF1">
    <property type="entry name" value="UPF0502 PROTEIN YCEH"/>
    <property type="match status" value="1"/>
</dbReference>
<dbReference type="Pfam" id="PF04337">
    <property type="entry name" value="DUF480"/>
    <property type="match status" value="1"/>
</dbReference>
<dbReference type="SUPFAM" id="SSF46785">
    <property type="entry name" value="Winged helix' DNA-binding domain"/>
    <property type="match status" value="2"/>
</dbReference>
<evidence type="ECO:0000255" key="1">
    <source>
        <dbReference type="HAMAP-Rule" id="MF_01584"/>
    </source>
</evidence>
<accession>Q0HW81</accession>
<feature type="chain" id="PRO_0000309430" description="UPF0502 protein Shewmr7_1629">
    <location>
        <begin position="1"/>
        <end position="222"/>
    </location>
</feature>
<gene>
    <name type="ordered locus">Shewmr7_1629</name>
</gene>
<organism>
    <name type="scientific">Shewanella sp. (strain MR-7)</name>
    <dbReference type="NCBI Taxonomy" id="60481"/>
    <lineage>
        <taxon>Bacteria</taxon>
        <taxon>Pseudomonadati</taxon>
        <taxon>Pseudomonadota</taxon>
        <taxon>Gammaproteobacteria</taxon>
        <taxon>Alteromonadales</taxon>
        <taxon>Shewanellaceae</taxon>
        <taxon>Shewanella</taxon>
    </lineage>
</organism>
<name>Y1629_SHESR</name>
<protein>
    <recommendedName>
        <fullName evidence="1">UPF0502 protein Shewmr7_1629</fullName>
    </recommendedName>
</protein>
<sequence>MELTLHEARVIGCLLEKEVTTPEQYPLSLNALTLACNQKTSRDPVLDLSEAKVQDALDSLNKKRLISEQSGFGSRVVKYKHRFCNTEFSELQLSNAAVAIVCLLLLRGPQTPGELRTRSNRLHDFKDVLEVEACIKQLMERDKPVLAQLPREPGKRECRYTELFSQGAEQINAASLSADSPSADSNSLNAQDRQQLEARVTQLEEQVAKLKDKLDSLIASLS</sequence>
<reference key="1">
    <citation type="submission" date="2006-08" db="EMBL/GenBank/DDBJ databases">
        <title>Complete sequence of chromosome 1 of Shewanella sp. MR-7.</title>
        <authorList>
            <person name="Copeland A."/>
            <person name="Lucas S."/>
            <person name="Lapidus A."/>
            <person name="Barry K."/>
            <person name="Detter J.C."/>
            <person name="Glavina del Rio T."/>
            <person name="Hammon N."/>
            <person name="Israni S."/>
            <person name="Dalin E."/>
            <person name="Tice H."/>
            <person name="Pitluck S."/>
            <person name="Kiss H."/>
            <person name="Brettin T."/>
            <person name="Bruce D."/>
            <person name="Han C."/>
            <person name="Tapia R."/>
            <person name="Gilna P."/>
            <person name="Schmutz J."/>
            <person name="Larimer F."/>
            <person name="Land M."/>
            <person name="Hauser L."/>
            <person name="Kyrpides N."/>
            <person name="Mikhailova N."/>
            <person name="Nealson K."/>
            <person name="Konstantinidis K."/>
            <person name="Klappenbach J."/>
            <person name="Tiedje J."/>
            <person name="Richardson P."/>
        </authorList>
    </citation>
    <scope>NUCLEOTIDE SEQUENCE [LARGE SCALE GENOMIC DNA]</scope>
    <source>
        <strain>MR-7</strain>
    </source>
</reference>